<dbReference type="EC" id="3.1.1.85" evidence="2"/>
<dbReference type="EMBL" id="CP000789">
    <property type="protein sequence ID" value="ABU69618.1"/>
    <property type="molecule type" value="Genomic_DNA"/>
</dbReference>
<dbReference type="RefSeq" id="WP_005529108.1">
    <property type="nucleotide sequence ID" value="NC_009783.1"/>
</dbReference>
<dbReference type="SMR" id="A7MST3"/>
<dbReference type="ESTHER" id="vibhb-bioh">
    <property type="family name" value="BioH"/>
</dbReference>
<dbReference type="KEGG" id="vha:VIBHAR_00616"/>
<dbReference type="PATRIC" id="fig|338187.36.peg.555"/>
<dbReference type="UniPathway" id="UPA00078"/>
<dbReference type="Proteomes" id="UP000008152">
    <property type="component" value="Chromosome I"/>
</dbReference>
<dbReference type="GO" id="GO:0005737">
    <property type="term" value="C:cytoplasm"/>
    <property type="evidence" value="ECO:0007669"/>
    <property type="project" value="UniProtKB-SubCell"/>
</dbReference>
<dbReference type="GO" id="GO:0016020">
    <property type="term" value="C:membrane"/>
    <property type="evidence" value="ECO:0007669"/>
    <property type="project" value="TreeGrafter"/>
</dbReference>
<dbReference type="GO" id="GO:0090499">
    <property type="term" value="F:pimelyl-[acyl-carrier protein] methyl ester esterase activity"/>
    <property type="evidence" value="ECO:0007669"/>
    <property type="project" value="UniProtKB-EC"/>
</dbReference>
<dbReference type="GO" id="GO:0009102">
    <property type="term" value="P:biotin biosynthetic process"/>
    <property type="evidence" value="ECO:0007669"/>
    <property type="project" value="UniProtKB-UniRule"/>
</dbReference>
<dbReference type="Gene3D" id="3.40.50.1820">
    <property type="entry name" value="alpha/beta hydrolase"/>
    <property type="match status" value="1"/>
</dbReference>
<dbReference type="HAMAP" id="MF_01260">
    <property type="entry name" value="Carboxylester"/>
    <property type="match status" value="1"/>
</dbReference>
<dbReference type="InterPro" id="IPR000073">
    <property type="entry name" value="AB_hydrolase_1"/>
</dbReference>
<dbReference type="InterPro" id="IPR029058">
    <property type="entry name" value="AB_hydrolase_fold"/>
</dbReference>
<dbReference type="InterPro" id="IPR050266">
    <property type="entry name" value="AB_hydrolase_sf"/>
</dbReference>
<dbReference type="InterPro" id="IPR010076">
    <property type="entry name" value="BioH"/>
</dbReference>
<dbReference type="NCBIfam" id="TIGR01738">
    <property type="entry name" value="bioH"/>
    <property type="match status" value="1"/>
</dbReference>
<dbReference type="PANTHER" id="PTHR43798:SF31">
    <property type="entry name" value="AB HYDROLASE SUPERFAMILY PROTEIN YCLE"/>
    <property type="match status" value="1"/>
</dbReference>
<dbReference type="PANTHER" id="PTHR43798">
    <property type="entry name" value="MONOACYLGLYCEROL LIPASE"/>
    <property type="match status" value="1"/>
</dbReference>
<dbReference type="Pfam" id="PF00561">
    <property type="entry name" value="Abhydrolase_1"/>
    <property type="match status" value="1"/>
</dbReference>
<dbReference type="SUPFAM" id="SSF53474">
    <property type="entry name" value="alpha/beta-Hydrolases"/>
    <property type="match status" value="1"/>
</dbReference>
<protein>
    <recommendedName>
        <fullName evidence="2">Pimeloyl-[acyl-carrier protein] methyl ester esterase</fullName>
        <ecNumber evidence="2">3.1.1.85</ecNumber>
    </recommendedName>
    <alternativeName>
        <fullName evidence="2">Biotin synthesis protein BioH</fullName>
    </alternativeName>
    <alternativeName>
        <fullName evidence="2">Carboxylesterase BioH</fullName>
    </alternativeName>
</protein>
<keyword id="KW-0093">Biotin biosynthesis</keyword>
<keyword id="KW-0963">Cytoplasm</keyword>
<keyword id="KW-0378">Hydrolase</keyword>
<keyword id="KW-0719">Serine esterase</keyword>
<organism>
    <name type="scientific">Vibrio campbellii (strain ATCC BAA-1116)</name>
    <dbReference type="NCBI Taxonomy" id="2902295"/>
    <lineage>
        <taxon>Bacteria</taxon>
        <taxon>Pseudomonadati</taxon>
        <taxon>Pseudomonadota</taxon>
        <taxon>Gammaproteobacteria</taxon>
        <taxon>Vibrionales</taxon>
        <taxon>Vibrionaceae</taxon>
        <taxon>Vibrio</taxon>
    </lineage>
</organism>
<comment type="function">
    <text evidence="2">The physiological role of BioH is to remove the methyl group introduced by BioC when the pimeloyl moiety is complete. It allows to synthesize pimeloyl-ACP via the fatty acid synthetic pathway through the hydrolysis of the ester bonds of pimeloyl-ACP esters.</text>
</comment>
<comment type="catalytic activity">
    <reaction evidence="2">
        <text>6-carboxyhexanoyl-[ACP] methyl ester + H2O = 6-carboxyhexanoyl-[ACP] + methanol + H(+)</text>
        <dbReference type="Rhea" id="RHEA:42700"/>
        <dbReference type="Rhea" id="RHEA-COMP:9955"/>
        <dbReference type="Rhea" id="RHEA-COMP:10186"/>
        <dbReference type="ChEBI" id="CHEBI:15377"/>
        <dbReference type="ChEBI" id="CHEBI:15378"/>
        <dbReference type="ChEBI" id="CHEBI:17790"/>
        <dbReference type="ChEBI" id="CHEBI:78846"/>
        <dbReference type="ChEBI" id="CHEBI:82735"/>
        <dbReference type="EC" id="3.1.1.85"/>
    </reaction>
</comment>
<comment type="pathway">
    <text evidence="2">Cofactor biosynthesis; biotin biosynthesis.</text>
</comment>
<comment type="subunit">
    <text evidence="2">Monomer.</text>
</comment>
<comment type="subcellular location">
    <subcellularLocation>
        <location evidence="2">Cytoplasm</location>
    </subcellularLocation>
</comment>
<comment type="similarity">
    <text evidence="2">Belongs to the AB hydrolase superfamily. Carboxylesterase BioH family.</text>
</comment>
<gene>
    <name evidence="2" type="primary">bioH</name>
    <name type="ordered locus">VIBHAR_00616</name>
</gene>
<evidence type="ECO:0000255" key="1"/>
<evidence type="ECO:0000255" key="2">
    <source>
        <dbReference type="HAMAP-Rule" id="MF_01260"/>
    </source>
</evidence>
<sequence>MSTNLHWQSFGQGPDLVLLHGWGMNGAVWQQTVESLQPYFRVHVVDLPGYGHSAESHAEDLAKIADLVLQDAPEKAVWLGWSLGGLVATHIALNAPQRVSKLITVASSPKFAAERPWRGIQPNVLTAFTDQLLEDFSVTIERFMALQAMGSPSARKDVKQLKQAVLSRPQPNPDSLLVGLNILADVDLRDALTSLSMPMLRLYGRLDGLVPIKVASDLNEQLPSTQQFVFNQSSHAPFMTEHEAFCLQVREFAA</sequence>
<name>BIOH_VIBC1</name>
<proteinExistence type="inferred from homology"/>
<feature type="chain" id="PRO_1000067280" description="Pimeloyl-[acyl-carrier protein] methyl ester esterase">
    <location>
        <begin position="1"/>
        <end position="254"/>
    </location>
</feature>
<feature type="domain" description="AB hydrolase-1" evidence="1">
    <location>
        <begin position="16"/>
        <end position="241"/>
    </location>
</feature>
<feature type="active site" description="Nucleophile" evidence="2">
    <location>
        <position position="82"/>
    </location>
</feature>
<feature type="active site" evidence="2">
    <location>
        <position position="207"/>
    </location>
</feature>
<feature type="active site" evidence="2">
    <location>
        <position position="235"/>
    </location>
</feature>
<feature type="binding site" evidence="2">
    <location>
        <position position="22"/>
    </location>
    <ligand>
        <name>substrate</name>
    </ligand>
</feature>
<feature type="binding site" evidence="2">
    <location>
        <begin position="82"/>
        <end position="83"/>
    </location>
    <ligand>
        <name>substrate</name>
    </ligand>
</feature>
<feature type="binding site" evidence="2">
    <location>
        <begin position="143"/>
        <end position="147"/>
    </location>
    <ligand>
        <name>substrate</name>
    </ligand>
</feature>
<feature type="binding site" evidence="2">
    <location>
        <position position="235"/>
    </location>
    <ligand>
        <name>substrate</name>
    </ligand>
</feature>
<accession>A7MST3</accession>
<reference key="1">
    <citation type="submission" date="2007-08" db="EMBL/GenBank/DDBJ databases">
        <authorList>
            <consortium name="The Vibrio harveyi Genome Sequencing Project"/>
            <person name="Bassler B."/>
            <person name="Clifton S.W."/>
            <person name="Fulton L."/>
            <person name="Delehaunty K."/>
            <person name="Fronick C."/>
            <person name="Harrison M."/>
            <person name="Markivic C."/>
            <person name="Fulton R."/>
            <person name="Tin-Wollam A.-M."/>
            <person name="Shah N."/>
            <person name="Pepin K."/>
            <person name="Nash W."/>
            <person name="Thiruvilangam P."/>
            <person name="Bhonagiri V."/>
            <person name="Waters C."/>
            <person name="Tu K.C."/>
            <person name="Irgon J."/>
            <person name="Wilson R.K."/>
        </authorList>
    </citation>
    <scope>NUCLEOTIDE SEQUENCE [LARGE SCALE GENOMIC DNA]</scope>
    <source>
        <strain>ATCC BAA-1116 / BB120</strain>
    </source>
</reference>